<keyword id="KW-1015">Disulfide bond</keyword>
<keyword id="KW-0325">Glycoprotein</keyword>
<keyword id="KW-1032">Host cell membrane</keyword>
<keyword id="KW-1039">Host endosome</keyword>
<keyword id="KW-1040">Host Golgi apparatus</keyword>
<keyword id="KW-1043">Host membrane</keyword>
<keyword id="KW-0945">Host-virus interaction</keyword>
<keyword id="KW-0472">Membrane</keyword>
<keyword id="KW-0732">Signal</keyword>
<keyword id="KW-0812">Transmembrane</keyword>
<keyword id="KW-1133">Transmembrane helix</keyword>
<keyword id="KW-0832">Ubl conjugation</keyword>
<keyword id="KW-1161">Viral attachment to host cell</keyword>
<keyword id="KW-0261">Viral envelope protein</keyword>
<keyword id="KW-0946">Virion</keyword>
<keyword id="KW-1160">Virus entry into host cell</keyword>
<proteinExistence type="inferred from homology"/>
<reference key="1">
    <citation type="journal article" date="1987" name="J. Virol.">
        <title>Structure and expression of the herpes simplex virus type 2 glycoprotein gB gene.</title>
        <authorList>
            <person name="Stuve L.L."/>
            <person name="Brown-Shimer S."/>
            <person name="Pachl C."/>
            <person name="Najarian R."/>
            <person name="Dina D."/>
            <person name="Burke R.L."/>
        </authorList>
    </citation>
    <scope>NUCLEOTIDE SEQUENCE [GENOMIC DNA]</scope>
</reference>
<organismHost>
    <name type="scientific">Homo sapiens</name>
    <name type="common">Human</name>
    <dbReference type="NCBI Taxonomy" id="9606"/>
</organismHost>
<organism>
    <name type="scientific">Human herpesvirus 1 (strain Patton)</name>
    <name type="common">HHV-1</name>
    <name type="synonym">Human herpes simplex virus 1</name>
    <dbReference type="NCBI Taxonomy" id="10308"/>
    <lineage>
        <taxon>Viruses</taxon>
        <taxon>Duplodnaviria</taxon>
        <taxon>Heunggongvirae</taxon>
        <taxon>Peploviricota</taxon>
        <taxon>Herviviricetes</taxon>
        <taxon>Herpesvirales</taxon>
        <taxon>Orthoherpesviridae</taxon>
        <taxon>Alphaherpesvirinae</taxon>
        <taxon>Simplexvirus</taxon>
        <taxon>Simplexvirus humanalpha1</taxon>
        <taxon>Human herpesvirus 1</taxon>
    </lineage>
</organism>
<feature type="signal peptide" evidence="2">
    <location>
        <begin position="1"/>
        <end position="30"/>
    </location>
</feature>
<feature type="chain" id="PRO_0000038163" description="Envelope glycoprotein B" evidence="2">
    <location>
        <begin position="31"/>
        <end position="904"/>
    </location>
</feature>
<feature type="topological domain" description="Virion surface" evidence="2">
    <location>
        <begin position="31"/>
        <end position="774"/>
    </location>
</feature>
<feature type="transmembrane region" description="Helical" evidence="2">
    <location>
        <begin position="775"/>
        <end position="795"/>
    </location>
</feature>
<feature type="topological domain" description="Intravirion" evidence="2">
    <location>
        <begin position="796"/>
        <end position="904"/>
    </location>
</feature>
<feature type="region of interest" description="Disordered" evidence="3">
    <location>
        <begin position="31"/>
        <end position="88"/>
    </location>
</feature>
<feature type="region of interest" description="Involved in fusion and/or binding to host membrane" evidence="2">
    <location>
        <begin position="173"/>
        <end position="179"/>
    </location>
</feature>
<feature type="region of interest" description="Involved in fusion and/or binding to host membrane" evidence="2">
    <location>
        <begin position="258"/>
        <end position="265"/>
    </location>
</feature>
<feature type="region of interest" description="Disordered" evidence="3">
    <location>
        <begin position="470"/>
        <end position="492"/>
    </location>
</feature>
<feature type="region of interest" description="Hydrophobic membrane proximal region" evidence="2">
    <location>
        <begin position="719"/>
        <end position="772"/>
    </location>
</feature>
<feature type="region of interest" description="Disordered" evidence="3">
    <location>
        <begin position="883"/>
        <end position="904"/>
    </location>
</feature>
<feature type="short sequence motif" description="Golgi targeting" evidence="2">
    <location>
        <begin position="849"/>
        <end position="852"/>
    </location>
</feature>
<feature type="short sequence motif" description="Internalization motif" evidence="2">
    <location>
        <begin position="889"/>
        <end position="892"/>
    </location>
</feature>
<feature type="compositionally biased region" description="Low complexity" evidence="3">
    <location>
        <begin position="31"/>
        <end position="65"/>
    </location>
</feature>
<feature type="compositionally biased region" description="Pro residues" evidence="3">
    <location>
        <begin position="476"/>
        <end position="485"/>
    </location>
</feature>
<feature type="glycosylation site" description="N-linked (GlcNAc...) asparagine; by host" evidence="2">
    <location>
        <position position="87"/>
    </location>
</feature>
<feature type="glycosylation site" description="N-linked (GlcNAc...) asparagine; by host" evidence="2">
    <location>
        <position position="141"/>
    </location>
</feature>
<feature type="glycosylation site" description="N-linked (GlcNAc...) asparagine; by host" evidence="2">
    <location>
        <position position="398"/>
    </location>
</feature>
<feature type="glycosylation site" description="N-linked (GlcNAc...) asparagine; by host" evidence="2">
    <location>
        <position position="430"/>
    </location>
</feature>
<feature type="glycosylation site" description="N-linked (GlcNAc...) asparagine; by host" evidence="2">
    <location>
        <position position="489"/>
    </location>
</feature>
<feature type="glycosylation site" description="N-linked (GlcNAc...) asparagine; by host" evidence="2">
    <location>
        <position position="674"/>
    </location>
</feature>
<feature type="disulfide bond" evidence="2">
    <location>
        <begin position="116"/>
        <end position="573"/>
    </location>
</feature>
<feature type="disulfide bond" evidence="2">
    <location>
        <begin position="133"/>
        <end position="529"/>
    </location>
</feature>
<feature type="disulfide bond" evidence="2">
    <location>
        <begin position="207"/>
        <end position="271"/>
    </location>
</feature>
<feature type="disulfide bond" evidence="2">
    <location>
        <begin position="364"/>
        <end position="412"/>
    </location>
</feature>
<feature type="disulfide bond" evidence="2">
    <location>
        <begin position="596"/>
        <end position="633"/>
    </location>
</feature>
<gene>
    <name evidence="2" type="primary">gB</name>
    <name type="ORF">UL27</name>
</gene>
<name>GB_HHV1P</name>
<evidence type="ECO:0000250" key="1"/>
<evidence type="ECO:0000255" key="2">
    <source>
        <dbReference type="HAMAP-Rule" id="MF_04032"/>
    </source>
</evidence>
<evidence type="ECO:0000256" key="3">
    <source>
        <dbReference type="SAM" id="MobiDB-lite"/>
    </source>
</evidence>
<comment type="function">
    <text evidence="2">Envelope glycoprotein that forms spikes at the surface of virion envelope and binds to the host cell entry receptors MYH9/NMMHC-IIA and MYH10/NMMHC-IIB, promoting the virus entry into host cells. Essential for the initial attachment to heparan sulfate moieties of the host cell surface proteoglycans. Involved in fusion of viral and cellular membranes leading to virus entry into the host cell: following initial binding to its host cell entry receptors, membrane fusion is mediated by the fusion machinery composed at least of gB and the heterodimer gH/gL. May be involved in the fusion between the virion envelope and the outer nuclear membrane during virion egress. Also plays a role, together with gK, in virus-induced cell-to-cell fusion (syncytia formation).</text>
</comment>
<comment type="subunit">
    <text evidence="2">Homotrimer; disulfide-linked. Interacts with host receptor MYH9/NMMHC-IIA (By similarity). Interacts with host receptor MYH10/NMMHC-IIB (By similarity). Binds to heparan sulfate proteoglycans. Interacts with gH/gL heterodimer.</text>
</comment>
<comment type="subcellular location">
    <subcellularLocation>
        <location evidence="2">Virion membrane</location>
        <topology evidence="2">Single-pass type I membrane protein</topology>
    </subcellularLocation>
    <subcellularLocation>
        <location evidence="2">Host cell membrane</location>
        <topology evidence="2">Single-pass type I membrane protein</topology>
    </subcellularLocation>
    <subcellularLocation>
        <location evidence="2">Host endosome membrane</location>
        <topology evidence="2">Single-pass type I membrane protein</topology>
    </subcellularLocation>
    <subcellularLocation>
        <location evidence="2">Host Golgi apparatus membrane</location>
        <topology evidence="2">Single-pass type I membrane protein</topology>
    </subcellularLocation>
    <text evidence="2">During virion morphogenesis, this protein probably accumulates in the endosomes and trans-Golgi where secondary envelopment occurs. It is probably transported to the cell surface from where it is endocytosed and directed to the trans-Golgi network (TGN).</text>
</comment>
<comment type="PTM">
    <text evidence="1">The cytoplasmic tail is phosphorylated by the viral kinase US3. Phosphorylation may be linked to a down-regulation of gB expression on cell surface (By similarity).</text>
</comment>
<comment type="PTM">
    <text evidence="1">ubiquitinated.</text>
</comment>
<comment type="similarity">
    <text evidence="2">Belongs to the herpesviridae glycoprotein B family.</text>
</comment>
<sequence>MRQGAPARGCRWFVVWALLGLTLGVLVASAAPSSPGTPGVAAATQAANGGPATPAPPALGAAPTGDPKPKKNKKPKNPTPPRPAGDNATVAAGHATLREHLRDIKAENTDANFYVCPPPTGATVVQFEQPRRCPTRPEGQNYTEGIAVVFKENIAPYKFKATMYYKDVTVSQVWFGHRYSQFMGIFEDRAPVPFEEVIDKINAKGVCRSTAKYVRNNLETTAFHRDDHETDMELKPANAATRTSRGWHTTDLKYNPSRVEAFHRYGTTVNCIVEEVDARSVYPYDEFVLATGDFVYMSPFYGYREGSHTEHTSYAADRFKQVDGFYARDLTTKARATAPTTRNLLTTPKFTVAWDWVPKRPSVCTMTKWQEVDEMLRSEYGGSFRFSSDAISTTFTTNLTEYPLSRVDLGDCIGKDARDAMDRIFARRYNATHIKVGQPQYYLANGGFLIAYQPLLSNTLAELYVREHLREQSRKPPNPTPPPPGASANASVERIKTTSSIEFARLQFTYNHIQRHVNDMLGRVAIAWCELQNHELTLWNEARKLNPNAIASATVGRRVSARMLGDVMAVSTCVPVAADNVIVQNSMRISSRPGACYSRPLVSFRYEDQGPLVEGQLGENNELRLTRDAIEPCTVGHRRYFTFGGGYVYFEESAYSHQLSRADITTVSTFIDLNITMLEDHEFVPLEVYTRHEIKDSGLLDYTEVQRRNQLHDLRFADIDTVIHADANAAMFAGLGAFFEGMGDLGRAVGKVVMGIVGGVVSAVSGVSSFMSNPFGALAVGLLVLAGLAAAFFAFRYVMRLQSNPMKALYPLTTKELKNPTNPDASGEGEEGGDFDEAKLAEAREMIRYMALVSAMERTEHKAKKKGTSALLSAKVTDMVMRKRRNTNYTQVPNKDGDADEDDL</sequence>
<dbReference type="EMBL" id="K03541">
    <property type="protein sequence ID" value="AAA45778.1"/>
    <property type="molecule type" value="Genomic_DNA"/>
</dbReference>
<dbReference type="SMR" id="P08665"/>
<dbReference type="GlyCosmos" id="P08665">
    <property type="glycosylation" value="6 sites, No reported glycans"/>
</dbReference>
<dbReference type="GO" id="GO:0044175">
    <property type="term" value="C:host cell endosome membrane"/>
    <property type="evidence" value="ECO:0007669"/>
    <property type="project" value="UniProtKB-SubCell"/>
</dbReference>
<dbReference type="GO" id="GO:0044178">
    <property type="term" value="C:host cell Golgi membrane"/>
    <property type="evidence" value="ECO:0007669"/>
    <property type="project" value="UniProtKB-SubCell"/>
</dbReference>
<dbReference type="GO" id="GO:0020002">
    <property type="term" value="C:host cell plasma membrane"/>
    <property type="evidence" value="ECO:0007669"/>
    <property type="project" value="UniProtKB-SubCell"/>
</dbReference>
<dbReference type="GO" id="GO:0016020">
    <property type="term" value="C:membrane"/>
    <property type="evidence" value="ECO:0007669"/>
    <property type="project" value="UniProtKB-KW"/>
</dbReference>
<dbReference type="GO" id="GO:0019031">
    <property type="term" value="C:viral envelope"/>
    <property type="evidence" value="ECO:0007669"/>
    <property type="project" value="UniProtKB-KW"/>
</dbReference>
<dbReference type="GO" id="GO:0055036">
    <property type="term" value="C:virion membrane"/>
    <property type="evidence" value="ECO:0007669"/>
    <property type="project" value="UniProtKB-SubCell"/>
</dbReference>
<dbReference type="GO" id="GO:0046718">
    <property type="term" value="P:symbiont entry into host cell"/>
    <property type="evidence" value="ECO:0007669"/>
    <property type="project" value="UniProtKB-KW"/>
</dbReference>
<dbReference type="GO" id="GO:0019062">
    <property type="term" value="P:virion attachment to host cell"/>
    <property type="evidence" value="ECO:0007669"/>
    <property type="project" value="UniProtKB-KW"/>
</dbReference>
<dbReference type="FunFam" id="1.20.5.1890:FF:000001">
    <property type="entry name" value="Envelope glycoprotein B"/>
    <property type="match status" value="1"/>
</dbReference>
<dbReference type="FunFam" id="2.30.29.100:FF:000001">
    <property type="entry name" value="Envelope glycoprotein B"/>
    <property type="match status" value="1"/>
</dbReference>
<dbReference type="FunFam" id="2.30.30.1230:FF:000001">
    <property type="entry name" value="Envelope glycoprotein B"/>
    <property type="match status" value="1"/>
</dbReference>
<dbReference type="FunFam" id="6.10.250.3280:FF:000001">
    <property type="entry name" value="Envelope glycoprotein B"/>
    <property type="match status" value="1"/>
</dbReference>
<dbReference type="Gene3D" id="1.20.5.1890">
    <property type="match status" value="1"/>
</dbReference>
<dbReference type="Gene3D" id="2.30.29.100">
    <property type="match status" value="1"/>
</dbReference>
<dbReference type="Gene3D" id="2.30.30.1230">
    <property type="match status" value="1"/>
</dbReference>
<dbReference type="Gene3D" id="6.10.250.3280">
    <property type="match status" value="1"/>
</dbReference>
<dbReference type="HAMAP" id="MF_04032">
    <property type="entry name" value="HSV_GB"/>
    <property type="match status" value="1"/>
</dbReference>
<dbReference type="InterPro" id="IPR035377">
    <property type="entry name" value="Glycoprot_B_PH1"/>
</dbReference>
<dbReference type="InterPro" id="IPR035381">
    <property type="entry name" value="Glycoprot_B_PH2"/>
</dbReference>
<dbReference type="InterPro" id="IPR038631">
    <property type="entry name" value="Glycoprot_B_PH2_sf"/>
</dbReference>
<dbReference type="InterPro" id="IPR055341">
    <property type="entry name" value="Glycoprotein_B_ecto_C"/>
</dbReference>
<dbReference type="InterPro" id="IPR000234">
    <property type="entry name" value="Herpes_Glycoprot_B"/>
</dbReference>
<dbReference type="Pfam" id="PF17416">
    <property type="entry name" value="Glycoprot_B_PH1"/>
    <property type="match status" value="1"/>
</dbReference>
<dbReference type="Pfam" id="PF17417">
    <property type="entry name" value="Glycoprot_B_PH2"/>
    <property type="match status" value="1"/>
</dbReference>
<dbReference type="Pfam" id="PF00606">
    <property type="entry name" value="Glycoprotein_B"/>
    <property type="match status" value="1"/>
</dbReference>
<dbReference type="SUPFAM" id="SSF161008">
    <property type="entry name" value="Viral glycoprotein ectodomain-like"/>
    <property type="match status" value="1"/>
</dbReference>
<accession>P08665</accession>
<protein>
    <recommendedName>
        <fullName evidence="2">Envelope glycoprotein B</fullName>
        <shortName evidence="2">gB</shortName>
    </recommendedName>
</protein>